<reference key="1">
    <citation type="journal article" date="2004" name="Nucleic Acids Res.">
        <title>Whole genome comparisons of serotype 4b and 1/2a strains of the food-borne pathogen Listeria monocytogenes reveal new insights into the core genome components of this species.</title>
        <authorList>
            <person name="Nelson K.E."/>
            <person name="Fouts D.E."/>
            <person name="Mongodin E.F."/>
            <person name="Ravel J."/>
            <person name="DeBoy R.T."/>
            <person name="Kolonay J.F."/>
            <person name="Rasko D.A."/>
            <person name="Angiuoli S.V."/>
            <person name="Gill S.R."/>
            <person name="Paulsen I.T."/>
            <person name="Peterson J.D."/>
            <person name="White O."/>
            <person name="Nelson W.C."/>
            <person name="Nierman W.C."/>
            <person name="Beanan M.J."/>
            <person name="Brinkac L.M."/>
            <person name="Daugherty S.C."/>
            <person name="Dodson R.J."/>
            <person name="Durkin A.S."/>
            <person name="Madupu R."/>
            <person name="Haft D.H."/>
            <person name="Selengut J."/>
            <person name="Van Aken S.E."/>
            <person name="Khouri H.M."/>
            <person name="Fedorova N."/>
            <person name="Forberger H.A."/>
            <person name="Tran B."/>
            <person name="Kathariou S."/>
            <person name="Wonderling L.D."/>
            <person name="Uhlich G.A."/>
            <person name="Bayles D.O."/>
            <person name="Luchansky J.B."/>
            <person name="Fraser C.M."/>
        </authorList>
    </citation>
    <scope>NUCLEOTIDE SEQUENCE [LARGE SCALE GENOMIC DNA]</scope>
    <source>
        <strain>F2365</strain>
    </source>
</reference>
<name>HISX_LISMF</name>
<evidence type="ECO:0000255" key="1">
    <source>
        <dbReference type="HAMAP-Rule" id="MF_01024"/>
    </source>
</evidence>
<feature type="chain" id="PRO_0000135792" description="Histidinol dehydrogenase">
    <location>
        <begin position="1"/>
        <end position="427"/>
    </location>
</feature>
<feature type="active site" description="Proton acceptor" evidence="1">
    <location>
        <position position="322"/>
    </location>
</feature>
<feature type="active site" description="Proton acceptor" evidence="1">
    <location>
        <position position="323"/>
    </location>
</feature>
<feature type="binding site" evidence="1">
    <location>
        <position position="232"/>
    </location>
    <ligand>
        <name>substrate</name>
    </ligand>
</feature>
<feature type="binding site" evidence="1">
    <location>
        <position position="254"/>
    </location>
    <ligand>
        <name>substrate</name>
    </ligand>
</feature>
<feature type="binding site" evidence="1">
    <location>
        <position position="254"/>
    </location>
    <ligand>
        <name>Zn(2+)</name>
        <dbReference type="ChEBI" id="CHEBI:29105"/>
    </ligand>
</feature>
<feature type="binding site" evidence="1">
    <location>
        <position position="257"/>
    </location>
    <ligand>
        <name>substrate</name>
    </ligand>
</feature>
<feature type="binding site" evidence="1">
    <location>
        <position position="257"/>
    </location>
    <ligand>
        <name>Zn(2+)</name>
        <dbReference type="ChEBI" id="CHEBI:29105"/>
    </ligand>
</feature>
<feature type="binding site" evidence="1">
    <location>
        <position position="323"/>
    </location>
    <ligand>
        <name>substrate</name>
    </ligand>
</feature>
<feature type="binding site" evidence="1">
    <location>
        <position position="356"/>
    </location>
    <ligand>
        <name>substrate</name>
    </ligand>
</feature>
<feature type="binding site" evidence="1">
    <location>
        <position position="356"/>
    </location>
    <ligand>
        <name>Zn(2+)</name>
        <dbReference type="ChEBI" id="CHEBI:29105"/>
    </ligand>
</feature>
<feature type="binding site" evidence="1">
    <location>
        <position position="410"/>
    </location>
    <ligand>
        <name>substrate</name>
    </ligand>
</feature>
<feature type="binding site" evidence="1">
    <location>
        <position position="415"/>
    </location>
    <ligand>
        <name>substrate</name>
    </ligand>
</feature>
<feature type="binding site" evidence="1">
    <location>
        <position position="415"/>
    </location>
    <ligand>
        <name>Zn(2+)</name>
        <dbReference type="ChEBI" id="CHEBI:29105"/>
    </ligand>
</feature>
<organism>
    <name type="scientific">Listeria monocytogenes serotype 4b (strain F2365)</name>
    <dbReference type="NCBI Taxonomy" id="265669"/>
    <lineage>
        <taxon>Bacteria</taxon>
        <taxon>Bacillati</taxon>
        <taxon>Bacillota</taxon>
        <taxon>Bacilli</taxon>
        <taxon>Bacillales</taxon>
        <taxon>Listeriaceae</taxon>
        <taxon>Listeria</taxon>
    </lineage>
</organism>
<proteinExistence type="inferred from homology"/>
<keyword id="KW-0028">Amino-acid biosynthesis</keyword>
<keyword id="KW-0368">Histidine biosynthesis</keyword>
<keyword id="KW-0479">Metal-binding</keyword>
<keyword id="KW-0520">NAD</keyword>
<keyword id="KW-0560">Oxidoreductase</keyword>
<keyword id="KW-0862">Zinc</keyword>
<gene>
    <name evidence="1" type="primary">hisD</name>
    <name type="ordered locus">LMOf2365_0596</name>
</gene>
<accession>Q722Y3</accession>
<comment type="function">
    <text evidence="1">Catalyzes the sequential NAD-dependent oxidations of L-histidinol to L-histidinaldehyde and then to L-histidine.</text>
</comment>
<comment type="catalytic activity">
    <reaction evidence="1">
        <text>L-histidinol + 2 NAD(+) + H2O = L-histidine + 2 NADH + 3 H(+)</text>
        <dbReference type="Rhea" id="RHEA:20641"/>
        <dbReference type="ChEBI" id="CHEBI:15377"/>
        <dbReference type="ChEBI" id="CHEBI:15378"/>
        <dbReference type="ChEBI" id="CHEBI:57540"/>
        <dbReference type="ChEBI" id="CHEBI:57595"/>
        <dbReference type="ChEBI" id="CHEBI:57699"/>
        <dbReference type="ChEBI" id="CHEBI:57945"/>
        <dbReference type="EC" id="1.1.1.23"/>
    </reaction>
</comment>
<comment type="cofactor">
    <cofactor evidence="1">
        <name>Zn(2+)</name>
        <dbReference type="ChEBI" id="CHEBI:29105"/>
    </cofactor>
    <text evidence="1">Binds 1 zinc ion per subunit.</text>
</comment>
<comment type="pathway">
    <text evidence="1">Amino-acid biosynthesis; L-histidine biosynthesis; L-histidine from 5-phospho-alpha-D-ribose 1-diphosphate: step 9/9.</text>
</comment>
<comment type="similarity">
    <text evidence="1">Belongs to the histidinol dehydrogenase family.</text>
</comment>
<protein>
    <recommendedName>
        <fullName evidence="1">Histidinol dehydrogenase</fullName>
        <shortName evidence="1">HDH</shortName>
        <ecNumber evidence="1">1.1.1.23</ecNumber>
    </recommendedName>
</protein>
<sequence>MKILTGTVNELLNELKIETDTNTSIQVETEVKTIIEKVKTAGDQALFDFTSKFDGVGLTELRVPAADIQAASAKIEPAFLDALQQAKVNIESFHSKQKQHAFLDSEKDGVIRGQLIRPLETVGVYVPGGTAAYPSSVLMNVLPAKIAGVKRIVMITPPGENGINPYVLASAQLAGVDEIYQVGGAHGIAALAHGTESIPKVDKIVGPGNIYVATAKREVFGLVDIDMIAGPSEIVVLADENANPAFIAADLLSQAEHDILARAILITTSKKIAEETQNEIDKQLENLPRKAIAQKSIETRGKIIIAATTQEMFDIMNEIAPEHLEVQLENPMNYLYQIKNAGSIFLGSYASEPLGDYFAGPNHVLPTSGTAKFFSPLGVEDFTKRSAFISYTKEALAKEKDAIVLLAKKEGLDAHAKAIQIRFEEEN</sequence>
<dbReference type="EC" id="1.1.1.23" evidence="1"/>
<dbReference type="EMBL" id="AE017262">
    <property type="protein sequence ID" value="AAT03378.1"/>
    <property type="molecule type" value="Genomic_DNA"/>
</dbReference>
<dbReference type="RefSeq" id="WP_003725469.1">
    <property type="nucleotide sequence ID" value="NC_002973.6"/>
</dbReference>
<dbReference type="SMR" id="Q722Y3"/>
<dbReference type="KEGG" id="lmf:LMOf2365_0596"/>
<dbReference type="HOGENOM" id="CLU_006732_3_3_9"/>
<dbReference type="UniPathway" id="UPA00031">
    <property type="reaction ID" value="UER00014"/>
</dbReference>
<dbReference type="GO" id="GO:0005829">
    <property type="term" value="C:cytosol"/>
    <property type="evidence" value="ECO:0007669"/>
    <property type="project" value="TreeGrafter"/>
</dbReference>
<dbReference type="GO" id="GO:0004399">
    <property type="term" value="F:histidinol dehydrogenase activity"/>
    <property type="evidence" value="ECO:0007669"/>
    <property type="project" value="UniProtKB-UniRule"/>
</dbReference>
<dbReference type="GO" id="GO:0051287">
    <property type="term" value="F:NAD binding"/>
    <property type="evidence" value="ECO:0007669"/>
    <property type="project" value="InterPro"/>
</dbReference>
<dbReference type="GO" id="GO:0008270">
    <property type="term" value="F:zinc ion binding"/>
    <property type="evidence" value="ECO:0007669"/>
    <property type="project" value="UniProtKB-UniRule"/>
</dbReference>
<dbReference type="GO" id="GO:0000105">
    <property type="term" value="P:L-histidine biosynthetic process"/>
    <property type="evidence" value="ECO:0007669"/>
    <property type="project" value="UniProtKB-UniRule"/>
</dbReference>
<dbReference type="CDD" id="cd06572">
    <property type="entry name" value="Histidinol_dh"/>
    <property type="match status" value="1"/>
</dbReference>
<dbReference type="FunFam" id="3.40.50.1980:FF:000001">
    <property type="entry name" value="Histidinol dehydrogenase"/>
    <property type="match status" value="1"/>
</dbReference>
<dbReference type="FunFam" id="3.40.50.1980:FF:000026">
    <property type="entry name" value="Histidinol dehydrogenase"/>
    <property type="match status" value="1"/>
</dbReference>
<dbReference type="FunFam" id="1.20.5.1300:FF:000002">
    <property type="entry name" value="Histidinol dehydrogenase, chloroplastic"/>
    <property type="match status" value="1"/>
</dbReference>
<dbReference type="Gene3D" id="1.20.5.1300">
    <property type="match status" value="1"/>
</dbReference>
<dbReference type="Gene3D" id="3.40.50.1980">
    <property type="entry name" value="Nitrogenase molybdenum iron protein domain"/>
    <property type="match status" value="2"/>
</dbReference>
<dbReference type="HAMAP" id="MF_01024">
    <property type="entry name" value="HisD"/>
    <property type="match status" value="1"/>
</dbReference>
<dbReference type="InterPro" id="IPR016161">
    <property type="entry name" value="Ald_DH/histidinol_DH"/>
</dbReference>
<dbReference type="InterPro" id="IPR001692">
    <property type="entry name" value="Histidinol_DH_CS"/>
</dbReference>
<dbReference type="InterPro" id="IPR022695">
    <property type="entry name" value="Histidinol_DH_monofunct"/>
</dbReference>
<dbReference type="InterPro" id="IPR012131">
    <property type="entry name" value="Hstdl_DH"/>
</dbReference>
<dbReference type="NCBIfam" id="TIGR00069">
    <property type="entry name" value="hisD"/>
    <property type="match status" value="1"/>
</dbReference>
<dbReference type="PANTHER" id="PTHR21256:SF2">
    <property type="entry name" value="HISTIDINE BIOSYNTHESIS TRIFUNCTIONAL PROTEIN"/>
    <property type="match status" value="1"/>
</dbReference>
<dbReference type="PANTHER" id="PTHR21256">
    <property type="entry name" value="HISTIDINOL DEHYDROGENASE HDH"/>
    <property type="match status" value="1"/>
</dbReference>
<dbReference type="Pfam" id="PF00815">
    <property type="entry name" value="Histidinol_dh"/>
    <property type="match status" value="1"/>
</dbReference>
<dbReference type="PIRSF" id="PIRSF000099">
    <property type="entry name" value="Histidinol_dh"/>
    <property type="match status" value="1"/>
</dbReference>
<dbReference type="PRINTS" id="PR00083">
    <property type="entry name" value="HOLDHDRGNASE"/>
</dbReference>
<dbReference type="SUPFAM" id="SSF53720">
    <property type="entry name" value="ALDH-like"/>
    <property type="match status" value="1"/>
</dbReference>
<dbReference type="PROSITE" id="PS00611">
    <property type="entry name" value="HISOL_DEHYDROGENASE"/>
    <property type="match status" value="1"/>
</dbReference>